<dbReference type="EC" id="3.1.13.1" evidence="2"/>
<dbReference type="EMBL" id="BA000038">
    <property type="protein sequence ID" value="BAC96682.1"/>
    <property type="status" value="ALT_INIT"/>
    <property type="molecule type" value="Genomic_DNA"/>
</dbReference>
<dbReference type="RefSeq" id="WP_015727827.1">
    <property type="nucleotide sequence ID" value="NC_005140.1"/>
</dbReference>
<dbReference type="SMR" id="Q7MEL4"/>
<dbReference type="STRING" id="672.VV93_v1c36570"/>
<dbReference type="KEGG" id="vvy:VVA0656"/>
<dbReference type="PATRIC" id="fig|196600.6.peg.3850"/>
<dbReference type="eggNOG" id="COG4776">
    <property type="taxonomic scope" value="Bacteria"/>
</dbReference>
<dbReference type="HOGENOM" id="CLU_002333_7_3_6"/>
<dbReference type="Proteomes" id="UP000002675">
    <property type="component" value="Chromosome II"/>
</dbReference>
<dbReference type="GO" id="GO:0005829">
    <property type="term" value="C:cytosol"/>
    <property type="evidence" value="ECO:0007669"/>
    <property type="project" value="TreeGrafter"/>
</dbReference>
<dbReference type="GO" id="GO:0008859">
    <property type="term" value="F:exoribonuclease II activity"/>
    <property type="evidence" value="ECO:0007669"/>
    <property type="project" value="UniProtKB-UniRule"/>
</dbReference>
<dbReference type="GO" id="GO:0003723">
    <property type="term" value="F:RNA binding"/>
    <property type="evidence" value="ECO:0007669"/>
    <property type="project" value="UniProtKB-KW"/>
</dbReference>
<dbReference type="GO" id="GO:0006402">
    <property type="term" value="P:mRNA catabolic process"/>
    <property type="evidence" value="ECO:0007669"/>
    <property type="project" value="UniProtKB-UniRule"/>
</dbReference>
<dbReference type="Gene3D" id="2.40.50.640">
    <property type="match status" value="1"/>
</dbReference>
<dbReference type="Gene3D" id="2.40.50.140">
    <property type="entry name" value="Nucleic acid-binding proteins"/>
    <property type="match status" value="2"/>
</dbReference>
<dbReference type="HAMAP" id="MF_01036">
    <property type="entry name" value="RNase_II"/>
    <property type="match status" value="1"/>
</dbReference>
<dbReference type="InterPro" id="IPR011129">
    <property type="entry name" value="CSD"/>
</dbReference>
<dbReference type="InterPro" id="IPR012340">
    <property type="entry name" value="NA-bd_OB-fold"/>
</dbReference>
<dbReference type="InterPro" id="IPR013223">
    <property type="entry name" value="RNase_B_OB_dom"/>
</dbReference>
<dbReference type="InterPro" id="IPR011804">
    <property type="entry name" value="RNase_II"/>
</dbReference>
<dbReference type="InterPro" id="IPR001900">
    <property type="entry name" value="RNase_II/R"/>
</dbReference>
<dbReference type="InterPro" id="IPR022966">
    <property type="entry name" value="RNase_II/R_CS"/>
</dbReference>
<dbReference type="InterPro" id="IPR004476">
    <property type="entry name" value="RNase_II/RNase_R"/>
</dbReference>
<dbReference type="InterPro" id="IPR050180">
    <property type="entry name" value="RNR_Ribonuclease"/>
</dbReference>
<dbReference type="InterPro" id="IPR003029">
    <property type="entry name" value="S1_domain"/>
</dbReference>
<dbReference type="NCBIfam" id="TIGR00358">
    <property type="entry name" value="3_prime_RNase"/>
    <property type="match status" value="1"/>
</dbReference>
<dbReference type="NCBIfam" id="NF003455">
    <property type="entry name" value="PRK05054.1"/>
    <property type="match status" value="1"/>
</dbReference>
<dbReference type="NCBIfam" id="TIGR02062">
    <property type="entry name" value="RNase_B"/>
    <property type="match status" value="1"/>
</dbReference>
<dbReference type="PANTHER" id="PTHR23355:SF37">
    <property type="entry name" value="EXORIBONUCLEASE 2"/>
    <property type="match status" value="1"/>
</dbReference>
<dbReference type="PANTHER" id="PTHR23355">
    <property type="entry name" value="RIBONUCLEASE"/>
    <property type="match status" value="1"/>
</dbReference>
<dbReference type="Pfam" id="PF08206">
    <property type="entry name" value="OB_RNB"/>
    <property type="match status" value="1"/>
</dbReference>
<dbReference type="Pfam" id="PF00773">
    <property type="entry name" value="RNB"/>
    <property type="match status" value="1"/>
</dbReference>
<dbReference type="Pfam" id="PF00575">
    <property type="entry name" value="S1"/>
    <property type="match status" value="1"/>
</dbReference>
<dbReference type="SMART" id="SM00357">
    <property type="entry name" value="CSP"/>
    <property type="match status" value="1"/>
</dbReference>
<dbReference type="SMART" id="SM00955">
    <property type="entry name" value="RNB"/>
    <property type="match status" value="1"/>
</dbReference>
<dbReference type="SMART" id="SM00316">
    <property type="entry name" value="S1"/>
    <property type="match status" value="1"/>
</dbReference>
<dbReference type="SUPFAM" id="SSF50249">
    <property type="entry name" value="Nucleic acid-binding proteins"/>
    <property type="match status" value="4"/>
</dbReference>
<dbReference type="PROSITE" id="PS01175">
    <property type="entry name" value="RIBONUCLEASE_II"/>
    <property type="match status" value="1"/>
</dbReference>
<dbReference type="PROSITE" id="PS50126">
    <property type="entry name" value="S1"/>
    <property type="match status" value="1"/>
</dbReference>
<sequence>MFQDNPLLAQLKQQIQENLPKKEGTIKATEKGFGFLEVDSKTSFFIPPAYMKKCMHGDKVIAIIRTENEREVAEPQELVEQMLNRFIGRVKMFKGKLNVVPDHPQLKKMSLKAKTKKGLNPQEFAEGDWVVGHLIRHPLKDDNGFFVEISEKITDADDKIAPWWVTLAENDLPNSEPAGIDDWQIKDDADLERIDMTHIPFVTIDGESTKDMDDALYAKKNDAGDFELTIAIADPTAYITPDDEMDKVARERGFTIYLPGRNIPMLPRDLADELCSLIEGEIRPALCCTVTVSKDGVIGDDIQFFAANIKSHARLAYDNVSDWLETGSCEKWQPSEEIAAIVRDLYEFSQARAEWREKNAVVFPDRPDYRFELSEDNDVVAIHADMRRSANRLVEESMITANICAGKTLQAHFGTGVFNCHAGFKPEKIADVVELVNPEGTLEFTAESIATREGFAALRRWLSKQETTYLDNRIRKFQTYSEVSNQPLPHYAMGLDIYATWTSPIRKYGDMINHRMLKALILNKEPVQKPDDSVGEELALHRKHHKIAERNVADWLYARTLADAPENQTLFTGEIFDINRAGMRIRLLENGAAAFIPGSLIIDNKERIECNGDLGTVSIDKEVVYKLGDVLEVVLADVNQENRSLVAKPTQVFAELPVVEETQN</sequence>
<accession>Q7MEL4</accession>
<gene>
    <name evidence="2" type="primary">rnb</name>
    <name type="ordered locus">VVA0656</name>
</gene>
<proteinExistence type="inferred from homology"/>
<feature type="chain" id="PRO_0000166393" description="Exoribonuclease 2">
    <location>
        <begin position="1"/>
        <end position="664"/>
    </location>
</feature>
<feature type="domain" description="RNB" evidence="1">
    <location>
        <begin position="193"/>
        <end position="521"/>
    </location>
</feature>
<feature type="domain" description="S1 motif" evidence="2">
    <location>
        <begin position="568"/>
        <end position="650"/>
    </location>
</feature>
<keyword id="KW-0963">Cytoplasm</keyword>
<keyword id="KW-0269">Exonuclease</keyword>
<keyword id="KW-0378">Hydrolase</keyword>
<keyword id="KW-0540">Nuclease</keyword>
<keyword id="KW-0694">RNA-binding</keyword>
<name>RNB_VIBVY</name>
<organism>
    <name type="scientific">Vibrio vulnificus (strain YJ016)</name>
    <dbReference type="NCBI Taxonomy" id="196600"/>
    <lineage>
        <taxon>Bacteria</taxon>
        <taxon>Pseudomonadati</taxon>
        <taxon>Pseudomonadota</taxon>
        <taxon>Gammaproteobacteria</taxon>
        <taxon>Vibrionales</taxon>
        <taxon>Vibrionaceae</taxon>
        <taxon>Vibrio</taxon>
    </lineage>
</organism>
<reference key="1">
    <citation type="journal article" date="2003" name="Genome Res.">
        <title>Comparative genome analysis of Vibrio vulnificus, a marine pathogen.</title>
        <authorList>
            <person name="Chen C.-Y."/>
            <person name="Wu K.-M."/>
            <person name="Chang Y.-C."/>
            <person name="Chang C.-H."/>
            <person name="Tsai H.-C."/>
            <person name="Liao T.-L."/>
            <person name="Liu Y.-M."/>
            <person name="Chen H.-J."/>
            <person name="Shen A.B.-T."/>
            <person name="Li J.-C."/>
            <person name="Su T.-L."/>
            <person name="Shao C.-P."/>
            <person name="Lee C.-T."/>
            <person name="Hor L.-I."/>
            <person name="Tsai S.-F."/>
        </authorList>
    </citation>
    <scope>NUCLEOTIDE SEQUENCE [LARGE SCALE GENOMIC DNA]</scope>
    <source>
        <strain>YJ016</strain>
    </source>
</reference>
<comment type="function">
    <text evidence="2">Involved in mRNA degradation. Hydrolyzes single-stranded polyribonucleotides processively in the 3' to 5' direction.</text>
</comment>
<comment type="catalytic activity">
    <reaction evidence="2">
        <text>Exonucleolytic cleavage in the 3'- to 5'-direction to yield nucleoside 5'-phosphates.</text>
        <dbReference type="EC" id="3.1.13.1"/>
    </reaction>
</comment>
<comment type="subcellular location">
    <subcellularLocation>
        <location evidence="2">Cytoplasm</location>
    </subcellularLocation>
</comment>
<comment type="similarity">
    <text evidence="2">Belongs to the RNR ribonuclease family. RNase II subfamily.</text>
</comment>
<comment type="sequence caution" evidence="3">
    <conflict type="erroneous initiation">
        <sequence resource="EMBL-CDS" id="BAC96682"/>
    </conflict>
</comment>
<evidence type="ECO:0000255" key="1"/>
<evidence type="ECO:0000255" key="2">
    <source>
        <dbReference type="HAMAP-Rule" id="MF_01036"/>
    </source>
</evidence>
<evidence type="ECO:0000305" key="3"/>
<protein>
    <recommendedName>
        <fullName evidence="2">Exoribonuclease 2</fullName>
        <ecNumber evidence="2">3.1.13.1</ecNumber>
    </recommendedName>
    <alternativeName>
        <fullName evidence="2">Exoribonuclease II</fullName>
        <shortName evidence="2">RNase II</shortName>
        <shortName evidence="2">Ribonuclease II</shortName>
    </alternativeName>
</protein>